<protein>
    <recommendedName>
        <fullName>pH-response regulator protein palA/RIM20</fullName>
    </recommendedName>
    <alternativeName>
        <fullName>Regulator of IME2 protein 20</fullName>
    </alternativeName>
</protein>
<accession>Q12033</accession>
<accession>D6W2X5</accession>
<reference key="1">
    <citation type="journal article" date="1996" name="Yeast">
        <title>DNA sequence analysis of the VPH1-SNF2 region on chromosome XV of Saccharomyces cerevisiae.</title>
        <authorList>
            <person name="Cheret G."/>
            <person name="Bernardi A."/>
            <person name="Sor F.J."/>
        </authorList>
    </citation>
    <scope>NUCLEOTIDE SEQUENCE [GENOMIC DNA]</scope>
    <source>
        <strain>ATCC 204508 / S288c</strain>
    </source>
</reference>
<reference key="2">
    <citation type="journal article" date="1997" name="Nature">
        <title>The nucleotide sequence of Saccharomyces cerevisiae chromosome XV.</title>
        <authorList>
            <person name="Dujon B."/>
            <person name="Albermann K."/>
            <person name="Aldea M."/>
            <person name="Alexandraki D."/>
            <person name="Ansorge W."/>
            <person name="Arino J."/>
            <person name="Benes V."/>
            <person name="Bohn C."/>
            <person name="Bolotin-Fukuhara M."/>
            <person name="Bordonne R."/>
            <person name="Boyer J."/>
            <person name="Camasses A."/>
            <person name="Casamayor A."/>
            <person name="Casas C."/>
            <person name="Cheret G."/>
            <person name="Cziepluch C."/>
            <person name="Daignan-Fornier B."/>
            <person name="Dang V.-D."/>
            <person name="de Haan M."/>
            <person name="Delius H."/>
            <person name="Durand P."/>
            <person name="Fairhead C."/>
            <person name="Feldmann H."/>
            <person name="Gaillon L."/>
            <person name="Galisson F."/>
            <person name="Gamo F.-J."/>
            <person name="Gancedo C."/>
            <person name="Goffeau A."/>
            <person name="Goulding S.E."/>
            <person name="Grivell L.A."/>
            <person name="Habbig B."/>
            <person name="Hand N.J."/>
            <person name="Hani J."/>
            <person name="Hattenhorst U."/>
            <person name="Hebling U."/>
            <person name="Hernando Y."/>
            <person name="Herrero E."/>
            <person name="Heumann K."/>
            <person name="Hiesel R."/>
            <person name="Hilger F."/>
            <person name="Hofmann B."/>
            <person name="Hollenberg C.P."/>
            <person name="Hughes B."/>
            <person name="Jauniaux J.-C."/>
            <person name="Kalogeropoulos A."/>
            <person name="Katsoulou C."/>
            <person name="Kordes E."/>
            <person name="Lafuente M.J."/>
            <person name="Landt O."/>
            <person name="Louis E.J."/>
            <person name="Maarse A.C."/>
            <person name="Madania A."/>
            <person name="Mannhaupt G."/>
            <person name="Marck C."/>
            <person name="Martin R.P."/>
            <person name="Mewes H.-W."/>
            <person name="Michaux G."/>
            <person name="Paces V."/>
            <person name="Parle-McDermott A.G."/>
            <person name="Pearson B.M."/>
            <person name="Perrin A."/>
            <person name="Pettersson B."/>
            <person name="Poch O."/>
            <person name="Pohl T.M."/>
            <person name="Poirey R."/>
            <person name="Portetelle D."/>
            <person name="Pujol A."/>
            <person name="Purnelle B."/>
            <person name="Ramezani Rad M."/>
            <person name="Rechmann S."/>
            <person name="Schwager C."/>
            <person name="Schweizer M."/>
            <person name="Sor F."/>
            <person name="Sterky F."/>
            <person name="Tarassov I.A."/>
            <person name="Teodoru C."/>
            <person name="Tettelin H."/>
            <person name="Thierry A."/>
            <person name="Tobiasch E."/>
            <person name="Tzermia M."/>
            <person name="Uhlen M."/>
            <person name="Unseld M."/>
            <person name="Valens M."/>
            <person name="Vandenbol M."/>
            <person name="Vetter I."/>
            <person name="Vlcek C."/>
            <person name="Voet M."/>
            <person name="Volckaert G."/>
            <person name="Voss H."/>
            <person name="Wambutt R."/>
            <person name="Wedler H."/>
            <person name="Wiemann S."/>
            <person name="Winsor B."/>
            <person name="Wolfe K.H."/>
            <person name="Zollner A."/>
            <person name="Zumstein E."/>
            <person name="Kleine K."/>
        </authorList>
    </citation>
    <scope>NUCLEOTIDE SEQUENCE [LARGE SCALE GENOMIC DNA]</scope>
    <source>
        <strain>ATCC 204508 / S288c</strain>
    </source>
</reference>
<reference key="3">
    <citation type="journal article" date="2014" name="G3 (Bethesda)">
        <title>The reference genome sequence of Saccharomyces cerevisiae: Then and now.</title>
        <authorList>
            <person name="Engel S.R."/>
            <person name="Dietrich F.S."/>
            <person name="Fisk D.G."/>
            <person name="Binkley G."/>
            <person name="Balakrishnan R."/>
            <person name="Costanzo M.C."/>
            <person name="Dwight S.S."/>
            <person name="Hitz B.C."/>
            <person name="Karra K."/>
            <person name="Nash R.S."/>
            <person name="Weng S."/>
            <person name="Wong E.D."/>
            <person name="Lloyd P."/>
            <person name="Skrzypek M.S."/>
            <person name="Miyasato S.R."/>
            <person name="Simison M."/>
            <person name="Cherry J.M."/>
        </authorList>
    </citation>
    <scope>GENOME REANNOTATION</scope>
    <source>
        <strain>ATCC 204508 / S288c</strain>
    </source>
</reference>
<reference key="4">
    <citation type="journal article" date="2001" name="J. Bacteriol.">
        <title>Yeast PalA/AIP1/Alix homolog Rim20p associates with a PEST-like region and is required for its proteolytic cleavage.</title>
        <authorList>
            <person name="Xu W."/>
            <person name="Mitchell A.P."/>
        </authorList>
    </citation>
    <scope>FUNCTION</scope>
    <scope>INTERACTION WITH RIM101</scope>
    <scope>MUTAGENESIS OF 292-ASP-ASN-293</scope>
</reference>
<reference key="5">
    <citation type="journal article" date="2003" name="Nature">
        <title>Global analysis of protein localization in budding yeast.</title>
        <authorList>
            <person name="Huh W.-K."/>
            <person name="Falvo J.V."/>
            <person name="Gerke L.C."/>
            <person name="Carroll A.S."/>
            <person name="Howson R.W."/>
            <person name="Weissman J.S."/>
            <person name="O'Shea E.K."/>
        </authorList>
    </citation>
    <scope>SUBCELLULAR LOCATION [LARGE SCALE ANALYSIS]</scope>
</reference>
<reference key="6">
    <citation type="journal article" date="2003" name="Nature">
        <title>Global analysis of protein expression in yeast.</title>
        <authorList>
            <person name="Ghaemmaghami S."/>
            <person name="Huh W.-K."/>
            <person name="Bower K."/>
            <person name="Howson R.W."/>
            <person name="Belle A."/>
            <person name="Dephoure N."/>
            <person name="O'Shea E.K."/>
            <person name="Weissman J.S."/>
        </authorList>
    </citation>
    <scope>LEVEL OF PROTEIN EXPRESSION [LARGE SCALE ANALYSIS]</scope>
</reference>
<reference key="7">
    <citation type="journal article" date="2004" name="Mol. Biol. Cell">
        <title>Multivesicular body-ESCRT components function in pH response regulation in Saccharomyces cerevisiae and Candida albicans.</title>
        <authorList>
            <person name="Xu W."/>
            <person name="Smith F.J. Jr."/>
            <person name="Subaran R."/>
            <person name="Mitchell A.P."/>
        </authorList>
    </citation>
    <scope>INTERACTION WITH SNF7</scope>
</reference>
<reference key="8">
    <citation type="journal article" date="2012" name="Proc. Natl. Acad. Sci. U.S.A.">
        <title>N-terminal acetylome analyses and functional insights of the N-terminal acetyltransferase NatB.</title>
        <authorList>
            <person name="Van Damme P."/>
            <person name="Lasa M."/>
            <person name="Polevoda B."/>
            <person name="Gazquez C."/>
            <person name="Elosegui-Artola A."/>
            <person name="Kim D.S."/>
            <person name="De Juan-Pardo E."/>
            <person name="Demeyer K."/>
            <person name="Hole K."/>
            <person name="Larrea E."/>
            <person name="Timmerman E."/>
            <person name="Prieto J."/>
            <person name="Arnesen T."/>
            <person name="Sherman F."/>
            <person name="Gevaert K."/>
            <person name="Aldabe R."/>
        </authorList>
    </citation>
    <scope>ACETYLATION [LARGE SCALE ANALYSIS] AT SER-2</scope>
    <scope>CLEAVAGE OF INITIATOR METHIONINE [LARGE SCALE ANALYSIS]</scope>
    <scope>IDENTIFICATION BY MASS SPECTROMETRY [LARGE SCALE ANALYSIS]</scope>
</reference>
<dbReference type="EMBL" id="X89633">
    <property type="protein sequence ID" value="CAA61781.1"/>
    <property type="molecule type" value="Genomic_DNA"/>
</dbReference>
<dbReference type="EMBL" id="Z75183">
    <property type="protein sequence ID" value="CAA99500.1"/>
    <property type="molecule type" value="Genomic_DNA"/>
</dbReference>
<dbReference type="EMBL" id="BK006948">
    <property type="protein sequence ID" value="DAA11041.1"/>
    <property type="molecule type" value="Genomic_DNA"/>
</dbReference>
<dbReference type="PIR" id="S67177">
    <property type="entry name" value="S67177"/>
</dbReference>
<dbReference type="RefSeq" id="NP_014918.1">
    <property type="nucleotide sequence ID" value="NM_001183694.1"/>
</dbReference>
<dbReference type="SMR" id="Q12033"/>
<dbReference type="BioGRID" id="34664">
    <property type="interactions" value="542"/>
</dbReference>
<dbReference type="DIP" id="DIP-998N"/>
<dbReference type="FunCoup" id="Q12033">
    <property type="interactions" value="1407"/>
</dbReference>
<dbReference type="IntAct" id="Q12033">
    <property type="interactions" value="2"/>
</dbReference>
<dbReference type="STRING" id="4932.YOR275C"/>
<dbReference type="TCDB" id="3.A.31.1.1">
    <property type="family name" value="the endosomal sorting complexes required for transport iii (escrt-iii) family"/>
</dbReference>
<dbReference type="iPTMnet" id="Q12033"/>
<dbReference type="PaxDb" id="4932-YOR275C"/>
<dbReference type="PeptideAtlas" id="Q12033"/>
<dbReference type="EnsemblFungi" id="YOR275C_mRNA">
    <property type="protein sequence ID" value="YOR275C"/>
    <property type="gene ID" value="YOR275C"/>
</dbReference>
<dbReference type="GeneID" id="854449"/>
<dbReference type="KEGG" id="sce:YOR275C"/>
<dbReference type="AGR" id="SGD:S000005801"/>
<dbReference type="SGD" id="S000005801">
    <property type="gene designation" value="RIM20"/>
</dbReference>
<dbReference type="VEuPathDB" id="FungiDB:YOR275C"/>
<dbReference type="eggNOG" id="KOG2220">
    <property type="taxonomic scope" value="Eukaryota"/>
</dbReference>
<dbReference type="GeneTree" id="ENSGT00940000163083"/>
<dbReference type="HOGENOM" id="CLU_007181_3_1_1"/>
<dbReference type="InParanoid" id="Q12033"/>
<dbReference type="OMA" id="VSHAEEM"/>
<dbReference type="OrthoDB" id="64867at2759"/>
<dbReference type="BioCyc" id="YEAST:G3O-33764-MONOMER"/>
<dbReference type="BioGRID-ORCS" id="854449">
    <property type="hits" value="0 hits in 10 CRISPR screens"/>
</dbReference>
<dbReference type="PRO" id="PR:Q12033"/>
<dbReference type="Proteomes" id="UP000002311">
    <property type="component" value="Chromosome XV"/>
</dbReference>
<dbReference type="RNAct" id="Q12033">
    <property type="molecule type" value="protein"/>
</dbReference>
<dbReference type="GO" id="GO:0005737">
    <property type="term" value="C:cytoplasm"/>
    <property type="evidence" value="ECO:0007005"/>
    <property type="project" value="SGD"/>
</dbReference>
<dbReference type="GO" id="GO:0005768">
    <property type="term" value="C:endosome"/>
    <property type="evidence" value="ECO:0000318"/>
    <property type="project" value="GO_Central"/>
</dbReference>
<dbReference type="GO" id="GO:0005634">
    <property type="term" value="C:nucleus"/>
    <property type="evidence" value="ECO:0007005"/>
    <property type="project" value="SGD"/>
</dbReference>
<dbReference type="GO" id="GO:0005777">
    <property type="term" value="C:peroxisome"/>
    <property type="evidence" value="ECO:0000314"/>
    <property type="project" value="SGD"/>
</dbReference>
<dbReference type="GO" id="GO:0001403">
    <property type="term" value="P:invasive growth in response to glucose limitation"/>
    <property type="evidence" value="ECO:0000315"/>
    <property type="project" value="SGD"/>
</dbReference>
<dbReference type="GO" id="GO:0016485">
    <property type="term" value="P:protein processing"/>
    <property type="evidence" value="ECO:0000314"/>
    <property type="project" value="SGD"/>
</dbReference>
<dbReference type="GO" id="GO:0030435">
    <property type="term" value="P:sporulation resulting in formation of a cellular spore"/>
    <property type="evidence" value="ECO:0000315"/>
    <property type="project" value="SGD"/>
</dbReference>
<dbReference type="CDD" id="cd09241">
    <property type="entry name" value="BRO1_ScRim20-like"/>
    <property type="match status" value="1"/>
</dbReference>
<dbReference type="CDD" id="cd08915">
    <property type="entry name" value="V_Alix_like"/>
    <property type="match status" value="1"/>
</dbReference>
<dbReference type="Gene3D" id="1.20.120.560">
    <property type="entry name" value="alix/aip1 in complex with the ypdl late domain"/>
    <property type="match status" value="1"/>
</dbReference>
<dbReference type="Gene3D" id="1.20.140.50">
    <property type="entry name" value="alix/aip1 like domains"/>
    <property type="match status" value="2"/>
</dbReference>
<dbReference type="Gene3D" id="1.25.40.280">
    <property type="entry name" value="alix/aip1 like domains"/>
    <property type="match status" value="1"/>
</dbReference>
<dbReference type="InterPro" id="IPR025304">
    <property type="entry name" value="ALIX_V_dom"/>
</dbReference>
<dbReference type="InterPro" id="IPR004328">
    <property type="entry name" value="BRO1_dom"/>
</dbReference>
<dbReference type="InterPro" id="IPR038499">
    <property type="entry name" value="BRO1_sf"/>
</dbReference>
<dbReference type="PANTHER" id="PTHR23030">
    <property type="entry name" value="PCD6 INTERACTING PROTEIN-RELATED"/>
    <property type="match status" value="1"/>
</dbReference>
<dbReference type="PANTHER" id="PTHR23030:SF39">
    <property type="entry name" value="PROGRAMMED CELL DEATH 6-INTERACTING PROTEIN"/>
    <property type="match status" value="1"/>
</dbReference>
<dbReference type="Pfam" id="PF13949">
    <property type="entry name" value="ALIX_LYPXL_bnd"/>
    <property type="match status" value="2"/>
</dbReference>
<dbReference type="Pfam" id="PF03097">
    <property type="entry name" value="BRO1"/>
    <property type="match status" value="1"/>
</dbReference>
<dbReference type="SMART" id="SM01041">
    <property type="entry name" value="BRO1"/>
    <property type="match status" value="1"/>
</dbReference>
<dbReference type="PROSITE" id="PS51180">
    <property type="entry name" value="BRO1"/>
    <property type="match status" value="1"/>
</dbReference>
<feature type="initiator methionine" description="Removed" evidence="8">
    <location>
        <position position="1"/>
    </location>
</feature>
<feature type="chain" id="PRO_0000218885" description="pH-response regulator protein palA/RIM20">
    <location>
        <begin position="2"/>
        <end position="661"/>
    </location>
</feature>
<feature type="domain" description="BRO1" evidence="2">
    <location>
        <begin position="3"/>
        <end position="371"/>
    </location>
</feature>
<feature type="coiled-coil region" evidence="1">
    <location>
        <begin position="388"/>
        <end position="422"/>
    </location>
</feature>
<feature type="modified residue" description="N-acetylserine" evidence="8">
    <location>
        <position position="2"/>
    </location>
</feature>
<feature type="mutagenesis site" description="In RIM20-292; prevents cleavage of RIM101." evidence="3">
    <original>DN</original>
    <variation>AA</variation>
    <location>
        <begin position="292"/>
        <end position="293"/>
    </location>
</feature>
<comment type="function">
    <text evidence="3">Required for the proteolytic cleavage of the transcriptional repressor RIM101 in response to alkaline ambient pH, which is necessary for sporulation and invasive growth. May act as a scaffold protein that recruits the calpain-like protease RIM13 via SNF7 to its substrate RIM101.</text>
</comment>
<comment type="subunit">
    <text evidence="3 6">Interacts with SNF7 with its BRO1 domain. Interacts with RIM101 with its C-terminal domain, probably binding to its two YPX[LI] motifs.</text>
</comment>
<comment type="interaction">
    <interactant intactId="EBI-38947">
        <id>Q12033</id>
    </interactant>
    <interactant intactId="EBI-14422">
        <id>P33400</id>
        <label>RIM101</label>
    </interactant>
    <organismsDiffer>false</organismsDiffer>
    <experiments>3</experiments>
</comment>
<comment type="subcellular location">
    <subcellularLocation>
        <location evidence="4">Cytoplasm</location>
    </subcellularLocation>
    <subcellularLocation>
        <location evidence="4">Nucleus</location>
    </subcellularLocation>
</comment>
<comment type="miscellaneous">
    <text evidence="5">Present with 2881 molecules/cell in log phase SD medium.</text>
</comment>
<comment type="similarity">
    <text evidence="7">Belongs to the palA/RIM20 family.</text>
</comment>
<sequence length="661" mass="75947">MSELLAIPLKRTLEVDFATELSKLIDTTSFQTASFFQSDILKVVDARNNAIAPDISIDGLSALKEYYVILLQLEKKFPNNQIEFTWFQTLSQKSRGTSQYSLQWEKLTIIYNIGCMYSLLALNSNNDAAESLKTSCLYFQNAAGCFKHVLDHQKNLETIPVVDDATLNALTSLMLAQAQECFWFKAVQDKHKDSLIAKLSQQIVDFYCEAINDAQRGKLIRSDWINHLKAKKAYFSAVTYYRIALSFNEKKQFGNVVKALQMGLQFINESTLSSQAKFKTVVESSLKEAQRDNEFIYLQEVPSELPSIKPALMVKPSSSATLLPSIKKDETLFKDLIPIEVMEYCTAYNERQDEYVEQRVTNPLASLNKLLKESLTTFQIPQGLTKVSEAELSHYQASLNNLLINNKNVQVQLDNIEQILNEEAFTDNQLRLKHGTLNWTLPESSTTNTAYYEKLKKLRGYLDEGSAIDKQTNELFQSIDKNLIGSEIRLPESNDPLTNKIKMIIQERNDYIDRTRRKSSEYRILPKIITSYKKNGTVDFEPIFIGHLKYFDEDLRYVNSTKEENIKLIEEVNLSKKNNPGRSGIEPKKMVRIDPRELYIEDLRYSFKLLDEVKENLSAGTAFYENLITSTSNLYNEVQEYDTARRAEKARLDKSLTFEDQ</sequence>
<name>PALA_YEAST</name>
<gene>
    <name type="primary">RIM20</name>
    <name type="ordered locus">YOR275C</name>
</gene>
<keyword id="KW-0007">Acetylation</keyword>
<keyword id="KW-0175">Coiled coil</keyword>
<keyword id="KW-0963">Cytoplasm</keyword>
<keyword id="KW-0539">Nucleus</keyword>
<keyword id="KW-1185">Reference proteome</keyword>
<organism>
    <name type="scientific">Saccharomyces cerevisiae (strain ATCC 204508 / S288c)</name>
    <name type="common">Baker's yeast</name>
    <dbReference type="NCBI Taxonomy" id="559292"/>
    <lineage>
        <taxon>Eukaryota</taxon>
        <taxon>Fungi</taxon>
        <taxon>Dikarya</taxon>
        <taxon>Ascomycota</taxon>
        <taxon>Saccharomycotina</taxon>
        <taxon>Saccharomycetes</taxon>
        <taxon>Saccharomycetales</taxon>
        <taxon>Saccharomycetaceae</taxon>
        <taxon>Saccharomyces</taxon>
    </lineage>
</organism>
<proteinExistence type="evidence at protein level"/>
<evidence type="ECO:0000255" key="1"/>
<evidence type="ECO:0000255" key="2">
    <source>
        <dbReference type="PROSITE-ProRule" id="PRU00526"/>
    </source>
</evidence>
<evidence type="ECO:0000269" key="3">
    <source>
    </source>
</evidence>
<evidence type="ECO:0000269" key="4">
    <source>
    </source>
</evidence>
<evidence type="ECO:0000269" key="5">
    <source>
    </source>
</evidence>
<evidence type="ECO:0000269" key="6">
    <source>
    </source>
</evidence>
<evidence type="ECO:0000305" key="7"/>
<evidence type="ECO:0007744" key="8">
    <source>
    </source>
</evidence>